<organism>
    <name type="scientific">Saccharolobus solfataricus (strain ATCC 35092 / DSM 1617 / JCM 11322 / P2)</name>
    <name type="common">Sulfolobus solfataricus</name>
    <dbReference type="NCBI Taxonomy" id="273057"/>
    <lineage>
        <taxon>Archaea</taxon>
        <taxon>Thermoproteota</taxon>
        <taxon>Thermoprotei</taxon>
        <taxon>Sulfolobales</taxon>
        <taxon>Sulfolobaceae</taxon>
        <taxon>Saccharolobus</taxon>
    </lineage>
</organism>
<comment type="function">
    <text evidence="1">Activates the tRNA-splicing ligase complex by facilitating the enzymatic turnover of catalytic subunit RtcB. Acts by promoting the guanylylation of RtcB, a key intermediate step in tRNA ligation. Can also alter the NTP specificity of RtcB such that ATP, dGTP or ITP is used efficiently (By similarity).</text>
</comment>
<comment type="similarity">
    <text evidence="2">Belongs to the archease family.</text>
</comment>
<dbReference type="EMBL" id="Y18930">
    <property type="protein sequence ID" value="CAB57613.1"/>
    <property type="molecule type" value="Genomic_DNA"/>
</dbReference>
<dbReference type="EMBL" id="AE006641">
    <property type="protein sequence ID" value="AAK40990.1"/>
    <property type="molecule type" value="Genomic_DNA"/>
</dbReference>
<dbReference type="PIR" id="G90216">
    <property type="entry name" value="G90216"/>
</dbReference>
<dbReference type="RefSeq" id="WP_009991237.1">
    <property type="nucleotide sequence ID" value="NC_002754.1"/>
</dbReference>
<dbReference type="SMR" id="Q9UX79"/>
<dbReference type="FunCoup" id="Q9UX79">
    <property type="interactions" value="78"/>
</dbReference>
<dbReference type="STRING" id="273057.SSO0690"/>
<dbReference type="PaxDb" id="273057-SSO0690"/>
<dbReference type="EnsemblBacteria" id="AAK40990">
    <property type="protein sequence ID" value="AAK40990"/>
    <property type="gene ID" value="SSO0690"/>
</dbReference>
<dbReference type="KEGG" id="sso:SSO0690"/>
<dbReference type="PATRIC" id="fig|273057.12.peg.689"/>
<dbReference type="eggNOG" id="arCOG04055">
    <property type="taxonomic scope" value="Archaea"/>
</dbReference>
<dbReference type="HOGENOM" id="CLU_111362_3_0_2"/>
<dbReference type="InParanoid" id="Q9UX79"/>
<dbReference type="PhylomeDB" id="Q9UX79"/>
<dbReference type="Proteomes" id="UP000001974">
    <property type="component" value="Chromosome"/>
</dbReference>
<dbReference type="GO" id="GO:0005509">
    <property type="term" value="F:calcium ion binding"/>
    <property type="evidence" value="ECO:0007669"/>
    <property type="project" value="UniProtKB-UniRule"/>
</dbReference>
<dbReference type="GO" id="GO:0006388">
    <property type="term" value="P:tRNA splicing, via endonucleolytic cleavage and ligation"/>
    <property type="evidence" value="ECO:0007669"/>
    <property type="project" value="UniProtKB-UniRule"/>
</dbReference>
<dbReference type="Gene3D" id="3.55.10.10">
    <property type="entry name" value="Archease domain"/>
    <property type="match status" value="1"/>
</dbReference>
<dbReference type="HAMAP" id="MF_01222">
    <property type="entry name" value="Archease_arch"/>
    <property type="match status" value="1"/>
</dbReference>
<dbReference type="InterPro" id="IPR002804">
    <property type="entry name" value="Archease"/>
</dbReference>
<dbReference type="InterPro" id="IPR022952">
    <property type="entry name" value="Archease_arc"/>
</dbReference>
<dbReference type="InterPro" id="IPR023572">
    <property type="entry name" value="Archease_dom"/>
</dbReference>
<dbReference type="InterPro" id="IPR036820">
    <property type="entry name" value="Archease_dom_sf"/>
</dbReference>
<dbReference type="NCBIfam" id="NF001617">
    <property type="entry name" value="PRK00407.1"/>
    <property type="match status" value="1"/>
</dbReference>
<dbReference type="PANTHER" id="PTHR12682">
    <property type="entry name" value="ARCHEASE"/>
    <property type="match status" value="1"/>
</dbReference>
<dbReference type="PANTHER" id="PTHR12682:SF11">
    <property type="entry name" value="PROTEIN ARCHEASE"/>
    <property type="match status" value="1"/>
</dbReference>
<dbReference type="Pfam" id="PF01951">
    <property type="entry name" value="Archease"/>
    <property type="match status" value="1"/>
</dbReference>
<dbReference type="SUPFAM" id="SSF69819">
    <property type="entry name" value="MTH1598-like"/>
    <property type="match status" value="1"/>
</dbReference>
<gene>
    <name type="ordered locus">SSO0690</name>
    <name type="ORF">C10_040</name>
</gene>
<sequence length="139" mass="16454">MRQFEFFEHTADVGIKSYGRSLEEAFSNAALGVFEVITDTSKVRPVEYREIYLNGYDLENLLYKWIEELLYYYDSELMIFSKFDLMIDQDSITLEGKAWGERFNDKIHERRTVVKAMTYHQLSIEKTESGYVITFVVDI</sequence>
<proteinExistence type="inferred from homology"/>
<keyword id="KW-0106">Calcium</keyword>
<keyword id="KW-0479">Metal-binding</keyword>
<keyword id="KW-1185">Reference proteome</keyword>
<keyword id="KW-0819">tRNA processing</keyword>
<name>ARCH_SACS2</name>
<accession>Q9UX79</accession>
<evidence type="ECO:0000250" key="1"/>
<evidence type="ECO:0000255" key="2">
    <source>
        <dbReference type="HAMAP-Rule" id="MF_01222"/>
    </source>
</evidence>
<reference key="1">
    <citation type="journal article" date="2000" name="Genome">
        <title>Gene content and organization of a 281-kbp contig from the genome of the extremely thermophilic archaeon, Sulfolobus solfataricus P2.</title>
        <authorList>
            <person name="Charlebois R.L."/>
            <person name="Singh R.K."/>
            <person name="Chan-Weiher C.C.-Y."/>
            <person name="Allard G."/>
            <person name="Chow C."/>
            <person name="Confalonieri F."/>
            <person name="Curtis B."/>
            <person name="Duguet M."/>
            <person name="Erauso G."/>
            <person name="Faguy D."/>
            <person name="Gaasterland T."/>
            <person name="Garrett R.A."/>
            <person name="Gordon P."/>
            <person name="Jeffries A.C."/>
            <person name="Kozera C."/>
            <person name="Kushwaha N."/>
            <person name="Lafleur E."/>
            <person name="Medina N."/>
            <person name="Peng X."/>
            <person name="Penny S.L."/>
            <person name="She Q."/>
            <person name="St Jean A."/>
            <person name="van der Oost J."/>
            <person name="Young F."/>
            <person name="Zivanovic Y."/>
            <person name="Doolittle W.F."/>
            <person name="Ragan M.A."/>
            <person name="Sensen C.W."/>
        </authorList>
    </citation>
    <scope>NUCLEOTIDE SEQUENCE [LARGE SCALE GENOMIC DNA]</scope>
    <source>
        <strain>ATCC 35092 / DSM 1617 / JCM 11322 / P2</strain>
    </source>
</reference>
<reference key="2">
    <citation type="journal article" date="2001" name="Proc. Natl. Acad. Sci. U.S.A.">
        <title>The complete genome of the crenarchaeon Sulfolobus solfataricus P2.</title>
        <authorList>
            <person name="She Q."/>
            <person name="Singh R.K."/>
            <person name="Confalonieri F."/>
            <person name="Zivanovic Y."/>
            <person name="Allard G."/>
            <person name="Awayez M.J."/>
            <person name="Chan-Weiher C.C.-Y."/>
            <person name="Clausen I.G."/>
            <person name="Curtis B.A."/>
            <person name="De Moors A."/>
            <person name="Erauso G."/>
            <person name="Fletcher C."/>
            <person name="Gordon P.M.K."/>
            <person name="Heikamp-de Jong I."/>
            <person name="Jeffries A.C."/>
            <person name="Kozera C.J."/>
            <person name="Medina N."/>
            <person name="Peng X."/>
            <person name="Thi-Ngoc H.P."/>
            <person name="Redder P."/>
            <person name="Schenk M.E."/>
            <person name="Theriault C."/>
            <person name="Tolstrup N."/>
            <person name="Charlebois R.L."/>
            <person name="Doolittle W.F."/>
            <person name="Duguet M."/>
            <person name="Gaasterland T."/>
            <person name="Garrett R.A."/>
            <person name="Ragan M.A."/>
            <person name="Sensen C.W."/>
            <person name="Van der Oost J."/>
        </authorList>
    </citation>
    <scope>NUCLEOTIDE SEQUENCE [LARGE SCALE GENOMIC DNA]</scope>
    <source>
        <strain>ATCC 35092 / DSM 1617 / JCM 11322 / P2</strain>
    </source>
</reference>
<feature type="chain" id="PRO_0000068853" description="Protein archease">
    <location>
        <begin position="1"/>
        <end position="139"/>
    </location>
</feature>
<feature type="binding site" evidence="1">
    <location>
        <position position="12"/>
    </location>
    <ligand>
        <name>Ca(2+)</name>
        <dbReference type="ChEBI" id="CHEBI:29108"/>
    </ligand>
</feature>
<feature type="binding site" evidence="1">
    <location>
        <position position="138"/>
    </location>
    <ligand>
        <name>Ca(2+)</name>
        <dbReference type="ChEBI" id="CHEBI:29108"/>
    </ligand>
</feature>
<feature type="binding site" evidence="1">
    <location>
        <position position="139"/>
    </location>
    <ligand>
        <name>Ca(2+)</name>
        <dbReference type="ChEBI" id="CHEBI:29108"/>
    </ligand>
</feature>
<protein>
    <recommendedName>
        <fullName evidence="2">Protein archease</fullName>
    </recommendedName>
</protein>